<protein>
    <recommendedName>
        <fullName evidence="1">Chorismate synthase</fullName>
        <shortName evidence="1">CS</shortName>
        <ecNumber evidence="1">4.2.3.5</ecNumber>
    </recommendedName>
    <alternativeName>
        <fullName evidence="1">5-enolpyruvylshikimate-3-phosphate phospholyase</fullName>
    </alternativeName>
</protein>
<gene>
    <name evidence="1" type="primary">aroC</name>
    <name type="ordered locus">Bmul_1789</name>
    <name type="ordered locus">BMULJ_01449</name>
</gene>
<accession>A9ABG9</accession>
<proteinExistence type="inferred from homology"/>
<sequence length="366" mass="38924">MSGNTLGTLFTVTTFGESHGPAIGCVIDGCPPGMALTEADIQAELDRRKPGTSRHVTQRQEADEVEILSGVFEGVTTGTPIALLIRNTDQRSKDYGNIVETFRPGHADYTYWQKYGVRDYRGGGRSSARLTAPIVGAGAVAKKWLRERFGVEVRGYMSALGEIDVPFVDWSHVRENPFFAPNAAIVPELEAYMDALRKDGDSIGARIDVVASGVPVGWGEPVFDRLDADIAKAMMSINAVKGVEIGAGFDSVAQRGSVHGDELTPAGFVGNHAGGVLGGISTGQDITVSIAIKPTSSIRTPRRSITKDGQPATVETFGRHDPCVGIRATPIAESMLALVLIDHALRHRAQCGDVETQTPKIAGSAT</sequence>
<keyword id="KW-0028">Amino-acid biosynthesis</keyword>
<keyword id="KW-0057">Aromatic amino acid biosynthesis</keyword>
<keyword id="KW-0274">FAD</keyword>
<keyword id="KW-0285">Flavoprotein</keyword>
<keyword id="KW-0288">FMN</keyword>
<keyword id="KW-0456">Lyase</keyword>
<keyword id="KW-0521">NADP</keyword>
<keyword id="KW-1185">Reference proteome</keyword>
<evidence type="ECO:0000255" key="1">
    <source>
        <dbReference type="HAMAP-Rule" id="MF_00300"/>
    </source>
</evidence>
<comment type="function">
    <text evidence="1">Catalyzes the anti-1,4-elimination of the C-3 phosphate and the C-6 proR hydrogen from 5-enolpyruvylshikimate-3-phosphate (EPSP) to yield chorismate, which is the branch point compound that serves as the starting substrate for the three terminal pathways of aromatic amino acid biosynthesis. This reaction introduces a second double bond into the aromatic ring system.</text>
</comment>
<comment type="catalytic activity">
    <reaction evidence="1">
        <text>5-O-(1-carboxyvinyl)-3-phosphoshikimate = chorismate + phosphate</text>
        <dbReference type="Rhea" id="RHEA:21020"/>
        <dbReference type="ChEBI" id="CHEBI:29748"/>
        <dbReference type="ChEBI" id="CHEBI:43474"/>
        <dbReference type="ChEBI" id="CHEBI:57701"/>
        <dbReference type="EC" id="4.2.3.5"/>
    </reaction>
</comment>
<comment type="cofactor">
    <cofactor evidence="1">
        <name>FMNH2</name>
        <dbReference type="ChEBI" id="CHEBI:57618"/>
    </cofactor>
    <text evidence="1">Reduced FMN (FMNH(2)).</text>
</comment>
<comment type="pathway">
    <text evidence="1">Metabolic intermediate biosynthesis; chorismate biosynthesis; chorismate from D-erythrose 4-phosphate and phosphoenolpyruvate: step 7/7.</text>
</comment>
<comment type="subunit">
    <text evidence="1">Homotetramer.</text>
</comment>
<comment type="similarity">
    <text evidence="1">Belongs to the chorismate synthase family.</text>
</comment>
<organism>
    <name type="scientific">Burkholderia multivorans (strain ATCC 17616 / 249)</name>
    <dbReference type="NCBI Taxonomy" id="395019"/>
    <lineage>
        <taxon>Bacteria</taxon>
        <taxon>Pseudomonadati</taxon>
        <taxon>Pseudomonadota</taxon>
        <taxon>Betaproteobacteria</taxon>
        <taxon>Burkholderiales</taxon>
        <taxon>Burkholderiaceae</taxon>
        <taxon>Burkholderia</taxon>
        <taxon>Burkholderia cepacia complex</taxon>
    </lineage>
</organism>
<feature type="chain" id="PRO_1000115335" description="Chorismate synthase">
    <location>
        <begin position="1"/>
        <end position="366"/>
    </location>
</feature>
<feature type="binding site" evidence="1">
    <location>
        <position position="48"/>
    </location>
    <ligand>
        <name>NADP(+)</name>
        <dbReference type="ChEBI" id="CHEBI:58349"/>
    </ligand>
</feature>
<feature type="binding site" evidence="1">
    <location>
        <position position="54"/>
    </location>
    <ligand>
        <name>NADP(+)</name>
        <dbReference type="ChEBI" id="CHEBI:58349"/>
    </ligand>
</feature>
<feature type="binding site" evidence="1">
    <location>
        <begin position="125"/>
        <end position="127"/>
    </location>
    <ligand>
        <name>FMN</name>
        <dbReference type="ChEBI" id="CHEBI:58210"/>
    </ligand>
</feature>
<feature type="binding site" evidence="1">
    <location>
        <begin position="238"/>
        <end position="239"/>
    </location>
    <ligand>
        <name>FMN</name>
        <dbReference type="ChEBI" id="CHEBI:58210"/>
    </ligand>
</feature>
<feature type="binding site" evidence="1">
    <location>
        <position position="278"/>
    </location>
    <ligand>
        <name>FMN</name>
        <dbReference type="ChEBI" id="CHEBI:58210"/>
    </ligand>
</feature>
<feature type="binding site" evidence="1">
    <location>
        <begin position="293"/>
        <end position="297"/>
    </location>
    <ligand>
        <name>FMN</name>
        <dbReference type="ChEBI" id="CHEBI:58210"/>
    </ligand>
</feature>
<feature type="binding site" evidence="1">
    <location>
        <position position="319"/>
    </location>
    <ligand>
        <name>FMN</name>
        <dbReference type="ChEBI" id="CHEBI:58210"/>
    </ligand>
</feature>
<reference key="1">
    <citation type="submission" date="2007-10" db="EMBL/GenBank/DDBJ databases">
        <title>Complete sequence of chromosome 1 of Burkholderia multivorans ATCC 17616.</title>
        <authorList>
            <person name="Copeland A."/>
            <person name="Lucas S."/>
            <person name="Lapidus A."/>
            <person name="Barry K."/>
            <person name="Glavina del Rio T."/>
            <person name="Dalin E."/>
            <person name="Tice H."/>
            <person name="Pitluck S."/>
            <person name="Chain P."/>
            <person name="Malfatti S."/>
            <person name="Shin M."/>
            <person name="Vergez L."/>
            <person name="Schmutz J."/>
            <person name="Larimer F."/>
            <person name="Land M."/>
            <person name="Hauser L."/>
            <person name="Kyrpides N."/>
            <person name="Kim E."/>
            <person name="Tiedje J."/>
            <person name="Richardson P."/>
        </authorList>
    </citation>
    <scope>NUCLEOTIDE SEQUENCE [LARGE SCALE GENOMIC DNA]</scope>
    <source>
        <strain>ATCC 17616 / 249</strain>
    </source>
</reference>
<reference key="2">
    <citation type="submission" date="2007-04" db="EMBL/GenBank/DDBJ databases">
        <title>Complete genome sequence of Burkholderia multivorans ATCC 17616.</title>
        <authorList>
            <person name="Ohtsubo Y."/>
            <person name="Yamashita A."/>
            <person name="Kurokawa K."/>
            <person name="Takami H."/>
            <person name="Yuhara S."/>
            <person name="Nishiyama E."/>
            <person name="Endo R."/>
            <person name="Miyazaki R."/>
            <person name="Ono A."/>
            <person name="Yano K."/>
            <person name="Ito M."/>
            <person name="Sota M."/>
            <person name="Yuji N."/>
            <person name="Hattori M."/>
            <person name="Tsuda M."/>
        </authorList>
    </citation>
    <scope>NUCLEOTIDE SEQUENCE [LARGE SCALE GENOMIC DNA]</scope>
    <source>
        <strain>ATCC 17616 / 249</strain>
    </source>
</reference>
<name>AROC_BURM1</name>
<dbReference type="EC" id="4.2.3.5" evidence="1"/>
<dbReference type="EMBL" id="CP000868">
    <property type="protein sequence ID" value="ABX15477.1"/>
    <property type="molecule type" value="Genomic_DNA"/>
</dbReference>
<dbReference type="EMBL" id="AP009385">
    <property type="protein sequence ID" value="BAG43383.1"/>
    <property type="molecule type" value="Genomic_DNA"/>
</dbReference>
<dbReference type="RefSeq" id="WP_006413771.1">
    <property type="nucleotide sequence ID" value="NC_010084.1"/>
</dbReference>
<dbReference type="SMR" id="A9ABG9"/>
<dbReference type="STRING" id="395019.BMULJ_01449"/>
<dbReference type="GeneID" id="89569905"/>
<dbReference type="KEGG" id="bmj:BMULJ_01449"/>
<dbReference type="KEGG" id="bmu:Bmul_1789"/>
<dbReference type="eggNOG" id="COG0082">
    <property type="taxonomic scope" value="Bacteria"/>
</dbReference>
<dbReference type="HOGENOM" id="CLU_034547_0_2_4"/>
<dbReference type="UniPathway" id="UPA00053">
    <property type="reaction ID" value="UER00090"/>
</dbReference>
<dbReference type="Proteomes" id="UP000008815">
    <property type="component" value="Chromosome 1"/>
</dbReference>
<dbReference type="GO" id="GO:0005829">
    <property type="term" value="C:cytosol"/>
    <property type="evidence" value="ECO:0007669"/>
    <property type="project" value="TreeGrafter"/>
</dbReference>
<dbReference type="GO" id="GO:0004107">
    <property type="term" value="F:chorismate synthase activity"/>
    <property type="evidence" value="ECO:0007669"/>
    <property type="project" value="UniProtKB-UniRule"/>
</dbReference>
<dbReference type="GO" id="GO:0010181">
    <property type="term" value="F:FMN binding"/>
    <property type="evidence" value="ECO:0007669"/>
    <property type="project" value="TreeGrafter"/>
</dbReference>
<dbReference type="GO" id="GO:0008652">
    <property type="term" value="P:amino acid biosynthetic process"/>
    <property type="evidence" value="ECO:0007669"/>
    <property type="project" value="UniProtKB-KW"/>
</dbReference>
<dbReference type="GO" id="GO:0009073">
    <property type="term" value="P:aromatic amino acid family biosynthetic process"/>
    <property type="evidence" value="ECO:0007669"/>
    <property type="project" value="UniProtKB-KW"/>
</dbReference>
<dbReference type="GO" id="GO:0009423">
    <property type="term" value="P:chorismate biosynthetic process"/>
    <property type="evidence" value="ECO:0007669"/>
    <property type="project" value="UniProtKB-UniRule"/>
</dbReference>
<dbReference type="CDD" id="cd07304">
    <property type="entry name" value="Chorismate_synthase"/>
    <property type="match status" value="1"/>
</dbReference>
<dbReference type="FunFam" id="3.60.150.10:FF:000001">
    <property type="entry name" value="Chorismate synthase"/>
    <property type="match status" value="1"/>
</dbReference>
<dbReference type="Gene3D" id="3.60.150.10">
    <property type="entry name" value="Chorismate synthase AroC"/>
    <property type="match status" value="1"/>
</dbReference>
<dbReference type="HAMAP" id="MF_00300">
    <property type="entry name" value="Chorismate_synth"/>
    <property type="match status" value="1"/>
</dbReference>
<dbReference type="InterPro" id="IPR000453">
    <property type="entry name" value="Chorismate_synth"/>
</dbReference>
<dbReference type="InterPro" id="IPR035904">
    <property type="entry name" value="Chorismate_synth_AroC_sf"/>
</dbReference>
<dbReference type="InterPro" id="IPR020541">
    <property type="entry name" value="Chorismate_synthase_CS"/>
</dbReference>
<dbReference type="NCBIfam" id="TIGR00033">
    <property type="entry name" value="aroC"/>
    <property type="match status" value="1"/>
</dbReference>
<dbReference type="NCBIfam" id="NF003793">
    <property type="entry name" value="PRK05382.1"/>
    <property type="match status" value="1"/>
</dbReference>
<dbReference type="PANTHER" id="PTHR21085">
    <property type="entry name" value="CHORISMATE SYNTHASE"/>
    <property type="match status" value="1"/>
</dbReference>
<dbReference type="PANTHER" id="PTHR21085:SF0">
    <property type="entry name" value="CHORISMATE SYNTHASE"/>
    <property type="match status" value="1"/>
</dbReference>
<dbReference type="Pfam" id="PF01264">
    <property type="entry name" value="Chorismate_synt"/>
    <property type="match status" value="1"/>
</dbReference>
<dbReference type="PIRSF" id="PIRSF001456">
    <property type="entry name" value="Chorismate_synth"/>
    <property type="match status" value="1"/>
</dbReference>
<dbReference type="SUPFAM" id="SSF103263">
    <property type="entry name" value="Chorismate synthase, AroC"/>
    <property type="match status" value="1"/>
</dbReference>
<dbReference type="PROSITE" id="PS00787">
    <property type="entry name" value="CHORISMATE_SYNTHASE_1"/>
    <property type="match status" value="1"/>
</dbReference>
<dbReference type="PROSITE" id="PS00788">
    <property type="entry name" value="CHORISMATE_SYNTHASE_2"/>
    <property type="match status" value="1"/>
</dbReference>
<dbReference type="PROSITE" id="PS00789">
    <property type="entry name" value="CHORISMATE_SYNTHASE_3"/>
    <property type="match status" value="1"/>
</dbReference>